<keyword id="KW-0975">Bacterial flagellum</keyword>
<keyword id="KW-1005">Bacterial flagellum biogenesis</keyword>
<keyword id="KW-1006">Bacterial flagellum protein export</keyword>
<keyword id="KW-1003">Cell membrane</keyword>
<keyword id="KW-0472">Membrane</keyword>
<keyword id="KW-0653">Protein transport</keyword>
<keyword id="KW-1185">Reference proteome</keyword>
<keyword id="KW-0812">Transmembrane</keyword>
<keyword id="KW-1133">Transmembrane helix</keyword>
<keyword id="KW-0813">Transport</keyword>
<sequence length="239" mass="27092">MRKALTILILSAGFVFSQIPPIELKVGEGNLVDSIRLLIFLTILSLVPSILIMFTSFTRLVVVLSLLRQAIGTPQAPPNQVIIALSLFLTFFIMKPTIDKINSEALQPYIREEISDEEFFKRVEFYAKDFMLKHTRKETLEAFLSIAKIPKDSVKEPHEIPLRVVIPAFMVSELKTAFEIVFLLYIPFLIVDLVVASILISMGIIMIPPQLISLPFKIMLFVLANGWELVVLSLVRSYQ</sequence>
<protein>
    <recommendedName>
        <fullName>Flagellar biosynthetic protein FliP</fullName>
    </recommendedName>
</protein>
<reference key="1">
    <citation type="journal article" date="1998" name="Nature">
        <title>The complete genome of the hyperthermophilic bacterium Aquifex aeolicus.</title>
        <authorList>
            <person name="Deckert G."/>
            <person name="Warren P.V."/>
            <person name="Gaasterland T."/>
            <person name="Young W.G."/>
            <person name="Lenox A.L."/>
            <person name="Graham D.E."/>
            <person name="Overbeek R."/>
            <person name="Snead M.A."/>
            <person name="Keller M."/>
            <person name="Aujay M."/>
            <person name="Huber R."/>
            <person name="Feldman R.A."/>
            <person name="Short J.M."/>
            <person name="Olsen G.J."/>
            <person name="Swanson R.V."/>
        </authorList>
    </citation>
    <scope>NUCLEOTIDE SEQUENCE [LARGE SCALE GENOMIC DNA]</scope>
    <source>
        <strain>VF5</strain>
    </source>
</reference>
<name>FLIP_AQUAE</name>
<gene>
    <name type="primary">fliP</name>
    <name type="ordered locus">aq_1920</name>
</gene>
<accession>O67750</accession>
<evidence type="ECO:0000250" key="1"/>
<evidence type="ECO:0000255" key="2"/>
<evidence type="ECO:0000305" key="3"/>
<comment type="function">
    <text evidence="1">Plays a role in the flagellum-specific transport system.</text>
</comment>
<comment type="subcellular location">
    <subcellularLocation>
        <location evidence="3">Cell membrane</location>
        <topology evidence="3">Multi-pass membrane protein</topology>
    </subcellularLocation>
    <subcellularLocation>
        <location evidence="1">Bacterial flagellum basal body</location>
    </subcellularLocation>
</comment>
<comment type="similarity">
    <text evidence="3">Belongs to the FliP/MopC/SpaP family.</text>
</comment>
<feature type="chain" id="PRO_0000191978" description="Flagellar biosynthetic protein FliP">
    <location>
        <begin position="1"/>
        <end position="239"/>
    </location>
</feature>
<feature type="transmembrane region" description="Helical" evidence="2">
    <location>
        <begin position="4"/>
        <end position="24"/>
    </location>
</feature>
<feature type="transmembrane region" description="Helical" evidence="2">
    <location>
        <begin position="37"/>
        <end position="57"/>
    </location>
</feature>
<feature type="transmembrane region" description="Helical" evidence="2">
    <location>
        <begin position="81"/>
        <end position="101"/>
    </location>
</feature>
<feature type="transmembrane region" description="Helical" evidence="2">
    <location>
        <begin position="180"/>
        <end position="200"/>
    </location>
</feature>
<feature type="transmembrane region" description="Helical" evidence="2">
    <location>
        <begin position="204"/>
        <end position="224"/>
    </location>
</feature>
<proteinExistence type="inferred from homology"/>
<organism>
    <name type="scientific">Aquifex aeolicus (strain VF5)</name>
    <dbReference type="NCBI Taxonomy" id="224324"/>
    <lineage>
        <taxon>Bacteria</taxon>
        <taxon>Pseudomonadati</taxon>
        <taxon>Aquificota</taxon>
        <taxon>Aquificia</taxon>
        <taxon>Aquificales</taxon>
        <taxon>Aquificaceae</taxon>
        <taxon>Aquifex</taxon>
    </lineage>
</organism>
<dbReference type="EMBL" id="AE000657">
    <property type="protein sequence ID" value="AAC07711.1"/>
    <property type="molecule type" value="Genomic_DNA"/>
</dbReference>
<dbReference type="PIR" id="B70465">
    <property type="entry name" value="B70465"/>
</dbReference>
<dbReference type="RefSeq" id="NP_214318.1">
    <property type="nucleotide sequence ID" value="NC_000918.1"/>
</dbReference>
<dbReference type="RefSeq" id="WP_010881254.1">
    <property type="nucleotide sequence ID" value="NC_000918.1"/>
</dbReference>
<dbReference type="SMR" id="O67750"/>
<dbReference type="FunCoup" id="O67750">
    <property type="interactions" value="63"/>
</dbReference>
<dbReference type="STRING" id="224324.aq_1920"/>
<dbReference type="EnsemblBacteria" id="AAC07711">
    <property type="protein sequence ID" value="AAC07711"/>
    <property type="gene ID" value="aq_1920"/>
</dbReference>
<dbReference type="KEGG" id="aae:aq_1920"/>
<dbReference type="PATRIC" id="fig|224324.8.peg.1487"/>
<dbReference type="eggNOG" id="COG1338">
    <property type="taxonomic scope" value="Bacteria"/>
</dbReference>
<dbReference type="HOGENOM" id="CLU_042028_0_1_0"/>
<dbReference type="InParanoid" id="O67750"/>
<dbReference type="OrthoDB" id="9805111at2"/>
<dbReference type="Proteomes" id="UP000000798">
    <property type="component" value="Chromosome"/>
</dbReference>
<dbReference type="GO" id="GO:0009425">
    <property type="term" value="C:bacterial-type flagellum basal body"/>
    <property type="evidence" value="ECO:0007669"/>
    <property type="project" value="UniProtKB-SubCell"/>
</dbReference>
<dbReference type="GO" id="GO:0005886">
    <property type="term" value="C:plasma membrane"/>
    <property type="evidence" value="ECO:0000318"/>
    <property type="project" value="GO_Central"/>
</dbReference>
<dbReference type="GO" id="GO:0044780">
    <property type="term" value="P:bacterial-type flagellum assembly"/>
    <property type="evidence" value="ECO:0000318"/>
    <property type="project" value="GO_Central"/>
</dbReference>
<dbReference type="GO" id="GO:0071978">
    <property type="term" value="P:bacterial-type flagellum-dependent swarming motility"/>
    <property type="evidence" value="ECO:0000318"/>
    <property type="project" value="GO_Central"/>
</dbReference>
<dbReference type="GO" id="GO:0009306">
    <property type="term" value="P:protein secretion"/>
    <property type="evidence" value="ECO:0007669"/>
    <property type="project" value="InterPro"/>
</dbReference>
<dbReference type="InterPro" id="IPR005837">
    <property type="entry name" value="FliP"/>
</dbReference>
<dbReference type="InterPro" id="IPR005838">
    <property type="entry name" value="T3SS_IM_P"/>
</dbReference>
<dbReference type="NCBIfam" id="TIGR01103">
    <property type="entry name" value="fliP"/>
    <property type="match status" value="1"/>
</dbReference>
<dbReference type="NCBIfam" id="NF009438">
    <property type="entry name" value="PRK12797.1"/>
    <property type="match status" value="1"/>
</dbReference>
<dbReference type="PANTHER" id="PTHR30587">
    <property type="entry name" value="FLAGELLAR BIOSYNTHETIC PROTEIN FLIP"/>
    <property type="match status" value="1"/>
</dbReference>
<dbReference type="PANTHER" id="PTHR30587:SF0">
    <property type="entry name" value="FLAGELLAR BIOSYNTHETIC PROTEIN FLIP"/>
    <property type="match status" value="1"/>
</dbReference>
<dbReference type="Pfam" id="PF00813">
    <property type="entry name" value="FliP"/>
    <property type="match status" value="1"/>
</dbReference>
<dbReference type="PRINTS" id="PR00951">
    <property type="entry name" value="FLGBIOSNFLIP"/>
</dbReference>
<dbReference type="PRINTS" id="PR01302">
    <property type="entry name" value="TYPE3IMPPROT"/>
</dbReference>
<dbReference type="PROSITE" id="PS01060">
    <property type="entry name" value="FLIP_1"/>
    <property type="match status" value="1"/>
</dbReference>
<dbReference type="PROSITE" id="PS01061">
    <property type="entry name" value="FLIP_2"/>
    <property type="match status" value="1"/>
</dbReference>